<protein>
    <recommendedName>
        <fullName>Glutamate--tRNA ligase, mitochondrial</fullName>
        <ecNumber>6.1.1.17</ecNumber>
    </recommendedName>
    <alternativeName>
        <fullName>Glutamyl-tRNA synthetase</fullName>
        <shortName>GluRS</shortName>
    </alternativeName>
</protein>
<gene>
    <name type="primary">mse1</name>
    <name type="ORF">SPAPB1A10.11c</name>
</gene>
<keyword id="KW-0030">Aminoacyl-tRNA synthetase</keyword>
<keyword id="KW-0067">ATP-binding</keyword>
<keyword id="KW-0436">Ligase</keyword>
<keyword id="KW-0496">Mitochondrion</keyword>
<keyword id="KW-0547">Nucleotide-binding</keyword>
<keyword id="KW-0648">Protein biosynthesis</keyword>
<keyword id="KW-1185">Reference proteome</keyword>
<keyword id="KW-0694">RNA-binding</keyword>
<keyword id="KW-0809">Transit peptide</keyword>
<feature type="transit peptide" description="Mitochondrion" evidence="2">
    <location>
        <begin position="1"/>
        <end position="38"/>
    </location>
</feature>
<feature type="chain" id="PRO_0000314764" description="Glutamate--tRNA ligase, mitochondrial">
    <location>
        <begin position="39"/>
        <end position="526"/>
    </location>
</feature>
<feature type="short sequence motif" description="'HIGH' region">
    <location>
        <begin position="42"/>
        <end position="50"/>
    </location>
</feature>
<feature type="short sequence motif" description="'KMSKS' region">
    <location>
        <begin position="278"/>
        <end position="282"/>
    </location>
</feature>
<feature type="binding site" evidence="1">
    <location>
        <begin position="37"/>
        <end position="39"/>
    </location>
    <ligand>
        <name>L-glutamate</name>
        <dbReference type="ChEBI" id="CHEBI:29985"/>
    </ligand>
</feature>
<feature type="binding site" evidence="1">
    <location>
        <position position="47"/>
    </location>
    <ligand>
        <name>ATP</name>
        <dbReference type="ChEBI" id="CHEBI:30616"/>
    </ligand>
</feature>
<feature type="binding site" evidence="1">
    <location>
        <position position="73"/>
    </location>
    <ligand>
        <name>L-glutamate</name>
        <dbReference type="ChEBI" id="CHEBI:29985"/>
    </ligand>
</feature>
<feature type="binding site" evidence="1">
    <location>
        <begin position="222"/>
        <end position="226"/>
    </location>
    <ligand>
        <name>L-glutamate</name>
        <dbReference type="ChEBI" id="CHEBI:29985"/>
    </ligand>
</feature>
<feature type="binding site" evidence="1">
    <location>
        <position position="240"/>
    </location>
    <ligand>
        <name>L-glutamate</name>
        <dbReference type="ChEBI" id="CHEBI:29985"/>
    </ligand>
</feature>
<feature type="binding site" evidence="1">
    <location>
        <position position="243"/>
    </location>
    <ligand>
        <name>ATP</name>
        <dbReference type="ChEBI" id="CHEBI:30616"/>
    </ligand>
</feature>
<feature type="binding site" evidence="1">
    <location>
        <begin position="278"/>
        <end position="282"/>
    </location>
    <ligand>
        <name>ATP</name>
        <dbReference type="ChEBI" id="CHEBI:30616"/>
    </ligand>
</feature>
<name>SYEM_SCHPO</name>
<evidence type="ECO:0000250" key="1"/>
<evidence type="ECO:0000255" key="2"/>
<evidence type="ECO:0000269" key="3">
    <source>
    </source>
</evidence>
<evidence type="ECO:0000305" key="4"/>
<accession>Q9HDX9</accession>
<sequence length="526" mass="60645">MLSYTSCAKLICSRYIVSKISFYSLKRCNSTAVVRTRFAPSPTGFLHLGSLRTALFNYLWAKKSNGKFILRLEDTDQKRKVTGSDLEIYKVLKQFNLQWDEGPIVGGPYGPYEQSSRLQIYQKYAQHLIETGRAYVSYSVPIATTKIDSSTKYHEISIDDLTDAQRKLYKSKKFPYVVRFRMKEPSPFTDLVYGKIAIKSDSREIEESNNFVILKSDGFPTYHFANVVDDHLMHITHVIRGEEWVPSTIKHIQLYEAFGWKPPKFAHLPLLVNPDGSKLSKRQNDAHVSSLLQEGFLPEAILNFIALMGWSSRQKSDFLPMKELIDLFSIDKLTKSSSIVAFEKLYFLNKNYLRRAISDVNRLDELIELVQPRLIQKFSHSSRSHDKSYTKKLLLLLKNKVHTIKEFEKIVFYFYEASDLQQIRSLVSSLITVEELPKILTTILNKFETIEWNTHEIQISLKEIAMEHQMPLKKIQSLLRYGLCGNLPGGGISDTISLLGKETVKSRLERLLLSLKHELPKRSCIV</sequence>
<organism>
    <name type="scientific">Schizosaccharomyces pombe (strain 972 / ATCC 24843)</name>
    <name type="common">Fission yeast</name>
    <dbReference type="NCBI Taxonomy" id="284812"/>
    <lineage>
        <taxon>Eukaryota</taxon>
        <taxon>Fungi</taxon>
        <taxon>Dikarya</taxon>
        <taxon>Ascomycota</taxon>
        <taxon>Taphrinomycotina</taxon>
        <taxon>Schizosaccharomycetes</taxon>
        <taxon>Schizosaccharomycetales</taxon>
        <taxon>Schizosaccharomycetaceae</taxon>
        <taxon>Schizosaccharomyces</taxon>
    </lineage>
</organism>
<reference key="1">
    <citation type="journal article" date="2002" name="Nature">
        <title>The genome sequence of Schizosaccharomyces pombe.</title>
        <authorList>
            <person name="Wood V."/>
            <person name="Gwilliam R."/>
            <person name="Rajandream M.A."/>
            <person name="Lyne M.H."/>
            <person name="Lyne R."/>
            <person name="Stewart A."/>
            <person name="Sgouros J.G."/>
            <person name="Peat N."/>
            <person name="Hayles J."/>
            <person name="Baker S.G."/>
            <person name="Basham D."/>
            <person name="Bowman S."/>
            <person name="Brooks K."/>
            <person name="Brown D."/>
            <person name="Brown S."/>
            <person name="Chillingworth T."/>
            <person name="Churcher C.M."/>
            <person name="Collins M."/>
            <person name="Connor R."/>
            <person name="Cronin A."/>
            <person name="Davis P."/>
            <person name="Feltwell T."/>
            <person name="Fraser A."/>
            <person name="Gentles S."/>
            <person name="Goble A."/>
            <person name="Hamlin N."/>
            <person name="Harris D.E."/>
            <person name="Hidalgo J."/>
            <person name="Hodgson G."/>
            <person name="Holroyd S."/>
            <person name="Hornsby T."/>
            <person name="Howarth S."/>
            <person name="Huckle E.J."/>
            <person name="Hunt S."/>
            <person name="Jagels K."/>
            <person name="James K.D."/>
            <person name="Jones L."/>
            <person name="Jones M."/>
            <person name="Leather S."/>
            <person name="McDonald S."/>
            <person name="McLean J."/>
            <person name="Mooney P."/>
            <person name="Moule S."/>
            <person name="Mungall K.L."/>
            <person name="Murphy L.D."/>
            <person name="Niblett D."/>
            <person name="Odell C."/>
            <person name="Oliver K."/>
            <person name="O'Neil S."/>
            <person name="Pearson D."/>
            <person name="Quail M.A."/>
            <person name="Rabbinowitsch E."/>
            <person name="Rutherford K.M."/>
            <person name="Rutter S."/>
            <person name="Saunders D."/>
            <person name="Seeger K."/>
            <person name="Sharp S."/>
            <person name="Skelton J."/>
            <person name="Simmonds M.N."/>
            <person name="Squares R."/>
            <person name="Squares S."/>
            <person name="Stevens K."/>
            <person name="Taylor K."/>
            <person name="Taylor R.G."/>
            <person name="Tivey A."/>
            <person name="Walsh S.V."/>
            <person name="Warren T."/>
            <person name="Whitehead S."/>
            <person name="Woodward J.R."/>
            <person name="Volckaert G."/>
            <person name="Aert R."/>
            <person name="Robben J."/>
            <person name="Grymonprez B."/>
            <person name="Weltjens I."/>
            <person name="Vanstreels E."/>
            <person name="Rieger M."/>
            <person name="Schaefer M."/>
            <person name="Mueller-Auer S."/>
            <person name="Gabel C."/>
            <person name="Fuchs M."/>
            <person name="Duesterhoeft A."/>
            <person name="Fritzc C."/>
            <person name="Holzer E."/>
            <person name="Moestl D."/>
            <person name="Hilbert H."/>
            <person name="Borzym K."/>
            <person name="Langer I."/>
            <person name="Beck A."/>
            <person name="Lehrach H."/>
            <person name="Reinhardt R."/>
            <person name="Pohl T.M."/>
            <person name="Eger P."/>
            <person name="Zimmermann W."/>
            <person name="Wedler H."/>
            <person name="Wambutt R."/>
            <person name="Purnelle B."/>
            <person name="Goffeau A."/>
            <person name="Cadieu E."/>
            <person name="Dreano S."/>
            <person name="Gloux S."/>
            <person name="Lelaure V."/>
            <person name="Mottier S."/>
            <person name="Galibert F."/>
            <person name="Aves S.J."/>
            <person name="Xiang Z."/>
            <person name="Hunt C."/>
            <person name="Moore K."/>
            <person name="Hurst S.M."/>
            <person name="Lucas M."/>
            <person name="Rochet M."/>
            <person name="Gaillardin C."/>
            <person name="Tallada V.A."/>
            <person name="Garzon A."/>
            <person name="Thode G."/>
            <person name="Daga R.R."/>
            <person name="Cruzado L."/>
            <person name="Jimenez J."/>
            <person name="Sanchez M."/>
            <person name="del Rey F."/>
            <person name="Benito J."/>
            <person name="Dominguez A."/>
            <person name="Revuelta J.L."/>
            <person name="Moreno S."/>
            <person name="Armstrong J."/>
            <person name="Forsburg S.L."/>
            <person name="Cerutti L."/>
            <person name="Lowe T."/>
            <person name="McCombie W.R."/>
            <person name="Paulsen I."/>
            <person name="Potashkin J."/>
            <person name="Shpakovski G.V."/>
            <person name="Ussery D."/>
            <person name="Barrell B.G."/>
            <person name="Nurse P."/>
        </authorList>
    </citation>
    <scope>NUCLEOTIDE SEQUENCE [LARGE SCALE GENOMIC DNA]</scope>
    <source>
        <strain>972 / ATCC 24843</strain>
    </source>
</reference>
<reference key="2">
    <citation type="journal article" date="2006" name="Nat. Biotechnol.">
        <title>ORFeome cloning and global analysis of protein localization in the fission yeast Schizosaccharomyces pombe.</title>
        <authorList>
            <person name="Matsuyama A."/>
            <person name="Arai R."/>
            <person name="Yashiroda Y."/>
            <person name="Shirai A."/>
            <person name="Kamata A."/>
            <person name="Sekido S."/>
            <person name="Kobayashi Y."/>
            <person name="Hashimoto A."/>
            <person name="Hamamoto M."/>
            <person name="Hiraoka Y."/>
            <person name="Horinouchi S."/>
            <person name="Yoshida M."/>
        </authorList>
    </citation>
    <scope>SUBCELLULAR LOCATION [LARGE SCALE ANALYSIS]</scope>
</reference>
<dbReference type="EC" id="6.1.1.17"/>
<dbReference type="EMBL" id="CU329670">
    <property type="protein sequence ID" value="CAC21484.1"/>
    <property type="molecule type" value="Genomic_DNA"/>
</dbReference>
<dbReference type="RefSeq" id="NP_593525.1">
    <property type="nucleotide sequence ID" value="NM_001018959.2"/>
</dbReference>
<dbReference type="SMR" id="Q9HDX9"/>
<dbReference type="BioGRID" id="279816">
    <property type="interactions" value="3"/>
</dbReference>
<dbReference type="FunCoup" id="Q9HDX9">
    <property type="interactions" value="479"/>
</dbReference>
<dbReference type="IntAct" id="Q9HDX9">
    <property type="interactions" value="3"/>
</dbReference>
<dbReference type="MINT" id="Q9HDX9"/>
<dbReference type="STRING" id="284812.Q9HDX9"/>
<dbReference type="PaxDb" id="4896-SPAPB1A10.11c.1"/>
<dbReference type="EnsemblFungi" id="SPAPB1A10.11c.1">
    <property type="protein sequence ID" value="SPAPB1A10.11c.1:pep"/>
    <property type="gene ID" value="SPAPB1A10.11c"/>
</dbReference>
<dbReference type="GeneID" id="2543394"/>
<dbReference type="KEGG" id="spo:2543394"/>
<dbReference type="PomBase" id="SPAPB1A10.11c">
    <property type="gene designation" value="mse1"/>
</dbReference>
<dbReference type="VEuPathDB" id="FungiDB:SPAPB1A10.11c"/>
<dbReference type="eggNOG" id="KOG1149">
    <property type="taxonomic scope" value="Eukaryota"/>
</dbReference>
<dbReference type="HOGENOM" id="CLU_015768_6_3_1"/>
<dbReference type="InParanoid" id="Q9HDX9"/>
<dbReference type="OMA" id="HGATNVM"/>
<dbReference type="PhylomeDB" id="Q9HDX9"/>
<dbReference type="PRO" id="PR:Q9HDX9"/>
<dbReference type="Proteomes" id="UP000002485">
    <property type="component" value="Chromosome I"/>
</dbReference>
<dbReference type="GO" id="GO:0005759">
    <property type="term" value="C:mitochondrial matrix"/>
    <property type="evidence" value="ECO:0000305"/>
    <property type="project" value="PomBase"/>
</dbReference>
<dbReference type="GO" id="GO:0005739">
    <property type="term" value="C:mitochondrion"/>
    <property type="evidence" value="ECO:0007005"/>
    <property type="project" value="PomBase"/>
</dbReference>
<dbReference type="GO" id="GO:0005524">
    <property type="term" value="F:ATP binding"/>
    <property type="evidence" value="ECO:0000255"/>
    <property type="project" value="PomBase"/>
</dbReference>
<dbReference type="GO" id="GO:0004818">
    <property type="term" value="F:glutamate-tRNA ligase activity"/>
    <property type="evidence" value="ECO:0000318"/>
    <property type="project" value="GO_Central"/>
</dbReference>
<dbReference type="GO" id="GO:0000049">
    <property type="term" value="F:tRNA binding"/>
    <property type="evidence" value="ECO:0007669"/>
    <property type="project" value="InterPro"/>
</dbReference>
<dbReference type="GO" id="GO:0008270">
    <property type="term" value="F:zinc ion binding"/>
    <property type="evidence" value="ECO:0007669"/>
    <property type="project" value="InterPro"/>
</dbReference>
<dbReference type="GO" id="GO:0006424">
    <property type="term" value="P:glutamyl-tRNA aminoacylation"/>
    <property type="evidence" value="ECO:0000318"/>
    <property type="project" value="GO_Central"/>
</dbReference>
<dbReference type="GO" id="GO:0032543">
    <property type="term" value="P:mitochondrial translation"/>
    <property type="evidence" value="ECO:0000250"/>
    <property type="project" value="PomBase"/>
</dbReference>
<dbReference type="CDD" id="cd00808">
    <property type="entry name" value="GluRS_core"/>
    <property type="match status" value="1"/>
</dbReference>
<dbReference type="FunFam" id="3.40.50.620:FF:000045">
    <property type="entry name" value="Glutamate--tRNA ligase, mitochondrial"/>
    <property type="match status" value="1"/>
</dbReference>
<dbReference type="Gene3D" id="1.10.10.350">
    <property type="match status" value="1"/>
</dbReference>
<dbReference type="Gene3D" id="3.40.50.620">
    <property type="entry name" value="HUPs"/>
    <property type="match status" value="1"/>
</dbReference>
<dbReference type="HAMAP" id="MF_00022">
    <property type="entry name" value="Glu_tRNA_synth_type1"/>
    <property type="match status" value="1"/>
</dbReference>
<dbReference type="InterPro" id="IPR045462">
    <property type="entry name" value="aa-tRNA-synth_I_cd-bd"/>
</dbReference>
<dbReference type="InterPro" id="IPR020751">
    <property type="entry name" value="aa-tRNA-synth_I_codon-bd_sub2"/>
</dbReference>
<dbReference type="InterPro" id="IPR008925">
    <property type="entry name" value="aa_tRNA-synth_I_cd-bd_sf"/>
</dbReference>
<dbReference type="InterPro" id="IPR004527">
    <property type="entry name" value="Glu-tRNA-ligase_bac/mito"/>
</dbReference>
<dbReference type="InterPro" id="IPR000924">
    <property type="entry name" value="Glu/Gln-tRNA-synth"/>
</dbReference>
<dbReference type="InterPro" id="IPR020058">
    <property type="entry name" value="Glu/Gln-tRNA-synth_Ib_cat-dom"/>
</dbReference>
<dbReference type="InterPro" id="IPR049940">
    <property type="entry name" value="GluQ/Sye"/>
</dbReference>
<dbReference type="InterPro" id="IPR033910">
    <property type="entry name" value="GluRS_core"/>
</dbReference>
<dbReference type="InterPro" id="IPR014729">
    <property type="entry name" value="Rossmann-like_a/b/a_fold"/>
</dbReference>
<dbReference type="NCBIfam" id="TIGR00464">
    <property type="entry name" value="gltX_bact"/>
    <property type="match status" value="1"/>
</dbReference>
<dbReference type="PANTHER" id="PTHR43311">
    <property type="entry name" value="GLUTAMATE--TRNA LIGASE"/>
    <property type="match status" value="1"/>
</dbReference>
<dbReference type="PANTHER" id="PTHR43311:SF2">
    <property type="entry name" value="GLUTAMATE--TRNA LIGASE, MITOCHONDRIAL-RELATED"/>
    <property type="match status" value="1"/>
</dbReference>
<dbReference type="Pfam" id="PF19269">
    <property type="entry name" value="Anticodon_2"/>
    <property type="match status" value="1"/>
</dbReference>
<dbReference type="Pfam" id="PF00749">
    <property type="entry name" value="tRNA-synt_1c"/>
    <property type="match status" value="1"/>
</dbReference>
<dbReference type="PRINTS" id="PR00987">
    <property type="entry name" value="TRNASYNTHGLU"/>
</dbReference>
<dbReference type="SUPFAM" id="SSF48163">
    <property type="entry name" value="An anticodon-binding domain of class I aminoacyl-tRNA synthetases"/>
    <property type="match status" value="1"/>
</dbReference>
<dbReference type="SUPFAM" id="SSF52374">
    <property type="entry name" value="Nucleotidylyl transferase"/>
    <property type="match status" value="1"/>
</dbReference>
<comment type="function">
    <text evidence="1">Catalyzes the attachment of glutamate to tRNA(Glu) in a two-step reaction: glutamate is first activated by ATP to form Glu-AMP and then transferred to the acceptor end of tRNA(Glu).</text>
</comment>
<comment type="catalytic activity">
    <reaction>
        <text>tRNA(Glu) + L-glutamate + ATP = L-glutamyl-tRNA(Glu) + AMP + diphosphate</text>
        <dbReference type="Rhea" id="RHEA:23540"/>
        <dbReference type="Rhea" id="RHEA-COMP:9663"/>
        <dbReference type="Rhea" id="RHEA-COMP:9680"/>
        <dbReference type="ChEBI" id="CHEBI:29985"/>
        <dbReference type="ChEBI" id="CHEBI:30616"/>
        <dbReference type="ChEBI" id="CHEBI:33019"/>
        <dbReference type="ChEBI" id="CHEBI:78442"/>
        <dbReference type="ChEBI" id="CHEBI:78520"/>
        <dbReference type="ChEBI" id="CHEBI:456215"/>
        <dbReference type="EC" id="6.1.1.17"/>
    </reaction>
</comment>
<comment type="subcellular location">
    <subcellularLocation>
        <location evidence="3">Mitochondrion</location>
    </subcellularLocation>
</comment>
<comment type="similarity">
    <text evidence="4">Belongs to the class-I aminoacyl-tRNA synthetase family. Glutamate--tRNA ligase type 1 subfamily.</text>
</comment>
<proteinExistence type="inferred from homology"/>